<name>SPT5_YEAST</name>
<accession>P27692</accession>
<accession>D6VZG4</accession>
<reference key="1">
    <citation type="journal article" date="1991" name="Mol. Cell. Biol.">
        <title>SPT5, an essential gene important for normal transcription in Saccharomyces cerevisiae, encodes an acidic nuclear protein with a carboxy-terminal repeat.</title>
        <authorList>
            <person name="Swanson M.S."/>
            <person name="Malone E.A."/>
            <person name="Winston F."/>
        </authorList>
    </citation>
    <scope>NUCLEOTIDE SEQUENCE [GENOMIC DNA]</scope>
    <scope>CHARACTERIZATION</scope>
    <source>
        <strain>ATCC 204508 / S288c</strain>
    </source>
</reference>
<reference key="2">
    <citation type="journal article" date="1997" name="Nature">
        <title>The nucleotide sequence of Saccharomyces cerevisiae chromosome XIII.</title>
        <authorList>
            <person name="Bowman S."/>
            <person name="Churcher C.M."/>
            <person name="Badcock K."/>
            <person name="Brown D."/>
            <person name="Chillingworth T."/>
            <person name="Connor R."/>
            <person name="Dedman K."/>
            <person name="Devlin K."/>
            <person name="Gentles S."/>
            <person name="Hamlin N."/>
            <person name="Hunt S."/>
            <person name="Jagels K."/>
            <person name="Lye G."/>
            <person name="Moule S."/>
            <person name="Odell C."/>
            <person name="Pearson D."/>
            <person name="Rajandream M.A."/>
            <person name="Rice P."/>
            <person name="Skelton J."/>
            <person name="Walsh S.V."/>
            <person name="Whitehead S."/>
            <person name="Barrell B.G."/>
        </authorList>
    </citation>
    <scope>NUCLEOTIDE SEQUENCE [LARGE SCALE GENOMIC DNA]</scope>
    <source>
        <strain>ATCC 204508 / S288c</strain>
    </source>
</reference>
<reference key="3">
    <citation type="journal article" date="2014" name="G3 (Bethesda)">
        <title>The reference genome sequence of Saccharomyces cerevisiae: Then and now.</title>
        <authorList>
            <person name="Engel S.R."/>
            <person name="Dietrich F.S."/>
            <person name="Fisk D.G."/>
            <person name="Binkley G."/>
            <person name="Balakrishnan R."/>
            <person name="Costanzo M.C."/>
            <person name="Dwight S.S."/>
            <person name="Hitz B.C."/>
            <person name="Karra K."/>
            <person name="Nash R.S."/>
            <person name="Weng S."/>
            <person name="Wong E.D."/>
            <person name="Lloyd P."/>
            <person name="Skrzypek M.S."/>
            <person name="Miyasato S.R."/>
            <person name="Simison M."/>
            <person name="Cherry J.M."/>
        </authorList>
    </citation>
    <scope>GENOME REANNOTATION</scope>
    <source>
        <strain>ATCC 204508 / S288c</strain>
    </source>
</reference>
<reference key="4">
    <citation type="journal article" date="1998" name="Genes Dev.">
        <title>Evidence that Spt4, Spt5, and Spt6 control transcription elongation by RNA polymerase II in Saccharomyces cerevisiae.</title>
        <authorList>
            <person name="Hartzog G.A."/>
            <person name="Wada T."/>
            <person name="Handa H."/>
            <person name="Winston F."/>
        </authorList>
    </citation>
    <scope>FUNCTION IN TRANSCRIPTION ELONGATION</scope>
    <scope>IDENTIFICATION IN THE SPT4-SPT5 COMPLEX</scope>
</reference>
<reference key="5">
    <citation type="journal article" date="2003" name="Genetics">
        <title>The Ras/PKA signaling pathway may control RNA polymerase II elongation via the Spt4p/Spt5p complex in Saccharomyces cerevisiae.</title>
        <authorList>
            <person name="Howard S.C."/>
            <person name="Hester A."/>
            <person name="Herman P.K."/>
        </authorList>
    </citation>
    <scope>CHARACTERIZATION</scope>
</reference>
<reference key="6">
    <citation type="journal article" date="2003" name="Nature">
        <title>Global analysis of protein expression in yeast.</title>
        <authorList>
            <person name="Ghaemmaghami S."/>
            <person name="Huh W.-K."/>
            <person name="Bower K."/>
            <person name="Howson R.W."/>
            <person name="Belle A."/>
            <person name="Dephoure N."/>
            <person name="O'Shea E.K."/>
            <person name="Weissman J.S."/>
        </authorList>
    </citation>
    <scope>LEVEL OF PROTEIN EXPRESSION [LARGE SCALE ANALYSIS]</scope>
</reference>
<reference key="7">
    <citation type="journal article" date="2003" name="Mol. Cell. Biol.">
        <title>Dual roles for Spt5 in pre-mRNA processing and transcription elongation revealed by identification of Spt5-associated proteins.</title>
        <authorList>
            <person name="Lindstrom D.L."/>
            <person name="Squazzo S.L."/>
            <person name="Muster N."/>
            <person name="Burckin T.A."/>
            <person name="Wachter K.C."/>
            <person name="Emigh C.A."/>
            <person name="McCleery J.A."/>
            <person name="Yates J.R. III"/>
            <person name="Hartzog G.A."/>
        </authorList>
    </citation>
    <scope>FUNCTION IN TRANSCRIPTION ELONGATION AND MRNA PROCESSING</scope>
</reference>
<reference key="8">
    <citation type="journal article" date="2003" name="EMBO J.">
        <title>Molecular evidence for a positive role of Spt4 in transcription elongation.</title>
        <authorList>
            <person name="Rondon A.G."/>
            <person name="Garcia-Rubio M."/>
            <person name="Gonzalez-Barrera S."/>
            <person name="Aguilera A."/>
        </authorList>
    </citation>
    <scope>FUNCTION IN TRANSCRIPTION ELONGATION</scope>
</reference>
<reference key="9">
    <citation type="journal article" date="2003" name="Proc. Natl. Acad. Sci. U.S.A.">
        <title>The proteome of Saccharomyces cerevisiae mitochondria.</title>
        <authorList>
            <person name="Sickmann A."/>
            <person name="Reinders J."/>
            <person name="Wagner Y."/>
            <person name="Joppich C."/>
            <person name="Zahedi R.P."/>
            <person name="Meyer H.E."/>
            <person name="Schoenfisch B."/>
            <person name="Perschil I."/>
            <person name="Chacinska A."/>
            <person name="Guiard B."/>
            <person name="Rehling P."/>
            <person name="Pfanner N."/>
            <person name="Meisinger C."/>
        </authorList>
    </citation>
    <scope>SUBCELLULAR LOCATION [LARGE SCALE ANALYSIS]</scope>
    <source>
        <strain>ATCC 76625 / YPH499</strain>
    </source>
</reference>
<reference key="10">
    <citation type="journal article" date="2005" name="Mol. Cell">
        <title>Distinction and relationship between elongation rate and processivity of RNA polymerase II in vivo.</title>
        <authorList>
            <person name="Mason P.B."/>
            <person name="Struhl K."/>
        </authorList>
    </citation>
    <scope>FUNCTION IN PROCESSIVITY</scope>
</reference>
<reference key="11">
    <citation type="journal article" date="2005" name="PLoS Comput. Biol.">
        <title>Analysis of a splice array experiment elucidates roles of chromatin elongation factor Spt4-5 in splicing.</title>
        <authorList>
            <person name="Xiao Y."/>
            <person name="Yang Y.H."/>
            <person name="Burckin T.A."/>
            <person name="Shiue L."/>
            <person name="Hartzog G.A."/>
            <person name="Segal M.R."/>
        </authorList>
    </citation>
    <scope>FUNCTION IN ALTERNATIVE SPLICING</scope>
</reference>
<reference key="12">
    <citation type="journal article" date="2007" name="Proc. Natl. Acad. Sci. U.S.A.">
        <title>Analysis of phosphorylation sites on proteins from Saccharomyces cerevisiae by electron transfer dissociation (ETD) mass spectrometry.</title>
        <authorList>
            <person name="Chi A."/>
            <person name="Huttenhower C."/>
            <person name="Geer L.Y."/>
            <person name="Coon J.J."/>
            <person name="Syka J.E.P."/>
            <person name="Bai D.L."/>
            <person name="Shabanowitz J."/>
            <person name="Burke D.J."/>
            <person name="Troyanskaya O.G."/>
            <person name="Hunt D.F."/>
        </authorList>
    </citation>
    <scope>PHOSPHORYLATION [LARGE SCALE ANALYSIS] AT THR-133 AND SER-136</scope>
    <scope>IDENTIFICATION BY MASS SPECTROMETRY [LARGE SCALE ANALYSIS]</scope>
</reference>
<reference key="13">
    <citation type="journal article" date="2008" name="Mol. Cell. Proteomics">
        <title>A multidimensional chromatography technology for in-depth phosphoproteome analysis.</title>
        <authorList>
            <person name="Albuquerque C.P."/>
            <person name="Smolka M.B."/>
            <person name="Payne S.H."/>
            <person name="Bafna V."/>
            <person name="Eng J."/>
            <person name="Zhou H."/>
        </authorList>
    </citation>
    <scope>IDENTIFICATION BY MASS SPECTROMETRY [LARGE SCALE ANALYSIS]</scope>
</reference>
<reference key="14">
    <citation type="journal article" date="2009" name="Mol. Cell">
        <title>Two-color cell array screen reveals interdependent roles for histone chaperones and a chromatin boundary regulator in histone gene repression.</title>
        <authorList>
            <person name="Fillingham J."/>
            <person name="Kainth P."/>
            <person name="Lambert J.P."/>
            <person name="van Bakel H."/>
            <person name="Tsui K."/>
            <person name="Pena-Castillo L."/>
            <person name="Nislow C."/>
            <person name="Figeys D."/>
            <person name="Hughes T.R."/>
            <person name="Greenblatt J."/>
            <person name="Andrews B.J."/>
        </authorList>
    </citation>
    <scope>SUBCELLULAR LOCATION</scope>
</reference>
<reference key="15">
    <citation type="journal article" date="2009" name="Science">
        <title>Global analysis of Cdk1 substrate phosphorylation sites provides insights into evolution.</title>
        <authorList>
            <person name="Holt L.J."/>
            <person name="Tuch B.B."/>
            <person name="Villen J."/>
            <person name="Johnson A.D."/>
            <person name="Gygi S.P."/>
            <person name="Morgan D.O."/>
        </authorList>
    </citation>
    <scope>PHOSPHORYLATION [LARGE SCALE ANALYSIS] AT THR-35; SER-188 AND SER-219</scope>
    <scope>IDENTIFICATION BY MASS SPECTROMETRY [LARGE SCALE ANALYSIS]</scope>
</reference>
<reference key="16">
    <citation type="journal article" date="2010" name="Genes Dev.">
        <title>Cotranscriptional recruitment of She2p by RNA pol II elongation factor Spt4-Spt5/DSIF promotes mRNA localization to the yeast bud.</title>
        <authorList>
            <person name="Shen Z."/>
            <person name="St-Denis A."/>
            <person name="Chartrand P."/>
        </authorList>
    </citation>
    <scope>INTERACTION WITH SHE2</scope>
</reference>
<organism>
    <name type="scientific">Saccharomyces cerevisiae (strain ATCC 204508 / S288c)</name>
    <name type="common">Baker's yeast</name>
    <dbReference type="NCBI Taxonomy" id="559292"/>
    <lineage>
        <taxon>Eukaryota</taxon>
        <taxon>Fungi</taxon>
        <taxon>Dikarya</taxon>
        <taxon>Ascomycota</taxon>
        <taxon>Saccharomycotina</taxon>
        <taxon>Saccharomycetes</taxon>
        <taxon>Saccharomycetales</taxon>
        <taxon>Saccharomycetaceae</taxon>
        <taxon>Saccharomyces</taxon>
    </lineage>
</organism>
<comment type="function">
    <text evidence="2 3 6 7 10">The SPT4-SPT5 complex mediates both activation and inhibition of transcription elongation, and plays a role in pre-mRNA processing. This complex seems to be important for the stability of the RNA polymerase II elongation machinery on the chromatin template but not for the inherent ability of this machinery to translocate down the gene.</text>
</comment>
<comment type="subunit">
    <text evidence="9 10">Component of the SPT4-SPT5 complex. Interacts with RNA polymerase II. Interacts with SHE2.</text>
</comment>
<comment type="interaction">
    <interactant intactId="EBI-17937">
        <id>P27692</id>
    </interactant>
    <interactant intactId="EBI-29913">
        <id>Q06697</id>
        <label>CDC73</label>
    </interactant>
    <organismsDiffer>false</organismsDiffer>
    <experiments>6</experiments>
</comment>
<comment type="interaction">
    <interactant intactId="EBI-17937">
        <id>P27692</id>
    </interactant>
    <interactant intactId="EBI-5283">
        <id>P89105</id>
        <label>CTR9</label>
    </interactant>
    <organismsDiffer>false</organismsDiffer>
    <experiments>2</experiments>
</comment>
<comment type="interaction">
    <interactant intactId="EBI-17937">
        <id>P27692</id>
    </interactant>
    <interactant intactId="EBI-29107">
        <id>P40164</id>
        <label>PSY2</label>
    </interactant>
    <organismsDiffer>false</organismsDiffer>
    <experiments>7</experiments>
</comment>
<comment type="interaction">
    <interactant intactId="EBI-17937">
        <id>P27692</id>
    </interactant>
    <interactant intactId="EBI-15760">
        <id>P04050</id>
        <label>RPO21</label>
    </interactant>
    <organismsDiffer>false</organismsDiffer>
    <experiments>4</experiments>
</comment>
<comment type="interaction">
    <interactant intactId="EBI-17937">
        <id>P27692</id>
    </interactant>
    <interactant intactId="EBI-16303">
        <id>P53064</id>
        <label>RTF1</label>
    </interactant>
    <organismsDiffer>false</organismsDiffer>
    <experiments>5</experiments>
</comment>
<comment type="interaction">
    <interactant intactId="EBI-17937">
        <id>P27692</id>
    </interactant>
    <interactant intactId="EBI-17928">
        <id>P32914</id>
        <label>SPT4</label>
    </interactant>
    <organismsDiffer>false</organismsDiffer>
    <experiments>12</experiments>
</comment>
<comment type="interaction">
    <interactant intactId="EBI-17937">
        <id>P27692</id>
    </interactant>
    <interactant intactId="EBI-17947">
        <id>P23615</id>
        <label>SPT6</label>
    </interactant>
    <organismsDiffer>false</organismsDiffer>
    <experiments>3</experiments>
</comment>
<comment type="subcellular location">
    <subcellularLocation>
        <location evidence="5">Nucleus</location>
    </subcellularLocation>
    <subcellularLocation>
        <location evidence="5">Mitochondrion</location>
    </subcellularLocation>
    <subcellularLocation>
        <location evidence="8">Chromosome</location>
    </subcellularLocation>
    <text evidence="8">Associates with the coding region of HTA1.</text>
</comment>
<comment type="domain">
    <text>The C-terminal repeats are critical for activity.</text>
</comment>
<comment type="miscellaneous">
    <text>It is phosphorylated in a PKA-dependent manner in vitro.</text>
</comment>
<comment type="miscellaneous">
    <text evidence="4">Present with 2340 molecules/cell in log phase SD medium.</text>
</comment>
<comment type="similarity">
    <text evidence="11">Belongs to the SPT5 family.</text>
</comment>
<comment type="caution">
    <text evidence="11">Was originally thought to be involved in the transcription initiation step.</text>
</comment>
<keyword id="KW-0002">3D-structure</keyword>
<keyword id="KW-0158">Chromosome</keyword>
<keyword id="KW-0496">Mitochondrion</keyword>
<keyword id="KW-0507">mRNA processing</keyword>
<keyword id="KW-0539">Nucleus</keyword>
<keyword id="KW-0597">Phosphoprotein</keyword>
<keyword id="KW-1185">Reference proteome</keyword>
<keyword id="KW-0677">Repeat</keyword>
<keyword id="KW-0804">Transcription</keyword>
<evidence type="ECO:0000256" key="1">
    <source>
        <dbReference type="SAM" id="MobiDB-lite"/>
    </source>
</evidence>
<evidence type="ECO:0000269" key="2">
    <source>
    </source>
</evidence>
<evidence type="ECO:0000269" key="3">
    <source>
    </source>
</evidence>
<evidence type="ECO:0000269" key="4">
    <source>
    </source>
</evidence>
<evidence type="ECO:0000269" key="5">
    <source>
    </source>
</evidence>
<evidence type="ECO:0000269" key="6">
    <source>
    </source>
</evidence>
<evidence type="ECO:0000269" key="7">
    <source>
    </source>
</evidence>
<evidence type="ECO:0000269" key="8">
    <source>
    </source>
</evidence>
<evidence type="ECO:0000269" key="9">
    <source>
    </source>
</evidence>
<evidence type="ECO:0000269" key="10">
    <source>
    </source>
</evidence>
<evidence type="ECO:0000305" key="11"/>
<evidence type="ECO:0007744" key="12">
    <source>
    </source>
</evidence>
<evidence type="ECO:0007744" key="13">
    <source>
    </source>
</evidence>
<evidence type="ECO:0007829" key="14">
    <source>
        <dbReference type="PDB" id="4YTK"/>
    </source>
</evidence>
<evidence type="ECO:0007829" key="15">
    <source>
        <dbReference type="PDB" id="4YTL"/>
    </source>
</evidence>
<evidence type="ECO:0007829" key="16">
    <source>
        <dbReference type="PDB" id="8JCH"/>
    </source>
</evidence>
<evidence type="ECO:0007829" key="17">
    <source>
        <dbReference type="PDB" id="8RAM"/>
    </source>
</evidence>
<sequence length="1063" mass="115650">MSDNSDTNVSMQDHDQQFADPVVVPQSTDTKDENTSDKDTVDSGNVTTTESTERAESTSNIPPLDGEEKEAKSEPQQPEDNAETAATEQVSSSNGPATDDAQATLNTDSSEANEIVKKEEGSDERKRPREEDTKNSDGDTKDEGDNKDEDDDEDDDDDDDDEDDDDEAPTKRRRQERNRFLDIEAEVSDDEDEDEDEEDSELVREGFITHGDDEDDEASAPGARRDDRLHRQLDQDLNKTSEEDAQRLAKELRERYGRSSSKQYRAAAQDGYVPQRFLLPSVDTATIWGVRCRPGKEKELIRKLLKKKFNLDRAMGKKKLKILSIFQRDNYTGRIYIEAPKQSVIEKFCNGVPDIYISQKLLIPVQELPLLLKPNKSDDVALEEGSYVRIKRGIYKGDLAMVDQISENNLEVMLKIVPRLDYGKFDEIDPTTQQRKSRRPTFAHRAPPQLFNPTMALRLDQANLYKRDDRHFTYKNEDYIDGYLYKSFRIQHVETKNIQPTVEELARFGSKEGAVDLTSVSQSIKKAQAAKVTFQPGDRIEVLNGEQRGSKGIVTRTTKDIATIKLNGFTTPLEFPISTLRKIFEPGDHVTVINGEHQGDAGLVLMVEQGQVTFMSTQTSREVTITANNLSKSIDTTATSSEYALHDIVELSAKNVACIIQAGHDIFKVIDETGKVSTITKGSILSKINTARARVSSVDANGNEIKIGDTIVEKVGSRREGQVLYIQTQQIFVVSKKIVENAGVFVVNPSNVEAVASKDNMLSNKMDLSKMNPEIISKMGPPSSKTFQQPIQSRGGREVALGKTVRIRSAGYKGQLGIVKDVNGDKATVELHSKNKHITIDKHKLTYYNREGGEGITYDELVNRRGRVPQARMGPSYVSAPRNMATGGIAAGAAATSSGLSGGMTPGWSSFDGGKTPAVNAHGGSGGGGVSSWGGASTWGGQGNGGASAWGGAGGGASAWGGQGTGATSTWGGASAWGNKSSWGGASTWASGGESNGAMSTWGGTGDRSAYGGASTWGGNNNNKSTRDGGASAWGNQDDGNRSAWNNQGNKSNYGGNSTWGGH</sequence>
<dbReference type="EMBL" id="M62882">
    <property type="protein sequence ID" value="AAA35085.1"/>
    <property type="molecule type" value="Genomic_DNA"/>
</dbReference>
<dbReference type="EMBL" id="Z49810">
    <property type="protein sequence ID" value="CAA89942.1"/>
    <property type="molecule type" value="Genomic_DNA"/>
</dbReference>
<dbReference type="EMBL" id="BK006946">
    <property type="protein sequence ID" value="DAA09888.1"/>
    <property type="molecule type" value="Genomic_DNA"/>
</dbReference>
<dbReference type="PIR" id="A40253">
    <property type="entry name" value="A40253"/>
</dbReference>
<dbReference type="RefSeq" id="NP_013703.1">
    <property type="nucleotide sequence ID" value="NM_001182366.1"/>
</dbReference>
<dbReference type="PDB" id="2EXU">
    <property type="method" value="X-ray"/>
    <property type="resolution" value="2.23 A"/>
    <property type="chains" value="A=285-375"/>
</dbReference>
<dbReference type="PDB" id="4YTK">
    <property type="method" value="X-ray"/>
    <property type="resolution" value="1.09 A"/>
    <property type="chains" value="A=382-511"/>
</dbReference>
<dbReference type="PDB" id="4YTL">
    <property type="method" value="X-ray"/>
    <property type="resolution" value="1.60 A"/>
    <property type="chains" value="A/B=534-632"/>
</dbReference>
<dbReference type="PDB" id="7NKX">
    <property type="method" value="EM"/>
    <property type="resolution" value="2.90 A"/>
    <property type="chains" value="Z=1-1063"/>
</dbReference>
<dbReference type="PDB" id="7NKY">
    <property type="method" value="EM"/>
    <property type="resolution" value="3.20 A"/>
    <property type="chains" value="Z=1-1063"/>
</dbReference>
<dbReference type="PDB" id="8JCH">
    <property type="method" value="EM"/>
    <property type="resolution" value="2.70 A"/>
    <property type="chains" value="W=1-1063"/>
</dbReference>
<dbReference type="PDB" id="8K5P">
    <property type="method" value="EM"/>
    <property type="resolution" value="2.80 A"/>
    <property type="chains" value="W=1-1063"/>
</dbReference>
<dbReference type="PDB" id="8RAM">
    <property type="method" value="EM"/>
    <property type="resolution" value="2.80 A"/>
    <property type="chains" value="Z=1-1063"/>
</dbReference>
<dbReference type="PDB" id="8RAP">
    <property type="method" value="EM"/>
    <property type="resolution" value="4.30 A"/>
    <property type="chains" value="Z=1-1063"/>
</dbReference>
<dbReference type="PDBsum" id="2EXU"/>
<dbReference type="PDBsum" id="4YTK"/>
<dbReference type="PDBsum" id="4YTL"/>
<dbReference type="PDBsum" id="7NKX"/>
<dbReference type="PDBsum" id="7NKY"/>
<dbReference type="PDBsum" id="8JCH"/>
<dbReference type="PDBsum" id="8K5P"/>
<dbReference type="PDBsum" id="8RAM"/>
<dbReference type="PDBsum" id="8RAP"/>
<dbReference type="EMDB" id="EMD-12449"/>
<dbReference type="EMDB" id="EMD-19019"/>
<dbReference type="EMDB" id="EMD-19022"/>
<dbReference type="EMDB" id="EMD-36162"/>
<dbReference type="EMDB" id="EMD-36908"/>
<dbReference type="SMR" id="P27692"/>
<dbReference type="BioGRID" id="35159">
    <property type="interactions" value="237"/>
</dbReference>
<dbReference type="ComplexPortal" id="CPX-1661">
    <property type="entry name" value="SPT4-SPT5 transcription elongation factor complex"/>
</dbReference>
<dbReference type="DIP" id="DIP-6621N"/>
<dbReference type="FunCoup" id="P27692">
    <property type="interactions" value="1651"/>
</dbReference>
<dbReference type="IntAct" id="P27692">
    <property type="interactions" value="112"/>
</dbReference>
<dbReference type="MINT" id="P27692"/>
<dbReference type="STRING" id="4932.YML010W"/>
<dbReference type="GlyGen" id="P27692">
    <property type="glycosylation" value="4 sites, 1 O-linked glycan (3 sites)"/>
</dbReference>
<dbReference type="iPTMnet" id="P27692"/>
<dbReference type="PaxDb" id="4932-YML010W"/>
<dbReference type="PeptideAtlas" id="P27692"/>
<dbReference type="EnsemblFungi" id="YML010W_mRNA">
    <property type="protein sequence ID" value="YML010W"/>
    <property type="gene ID" value="YML010W"/>
</dbReference>
<dbReference type="GeneID" id="854999"/>
<dbReference type="KEGG" id="sce:YML010W"/>
<dbReference type="AGR" id="SGD:S000004470"/>
<dbReference type="SGD" id="S000004470">
    <property type="gene designation" value="SPT5"/>
</dbReference>
<dbReference type="VEuPathDB" id="FungiDB:YML010W"/>
<dbReference type="eggNOG" id="KOG1999">
    <property type="taxonomic scope" value="Eukaryota"/>
</dbReference>
<dbReference type="GeneTree" id="ENSGT00440000037640"/>
<dbReference type="HOGENOM" id="CLU_003537_1_0_1"/>
<dbReference type="InParanoid" id="P27692"/>
<dbReference type="OMA" id="YPVGYMN"/>
<dbReference type="OrthoDB" id="28901at2759"/>
<dbReference type="BioCyc" id="YEAST:G3O-32614-MONOMER"/>
<dbReference type="Reactome" id="R-SCE-113418">
    <property type="pathway name" value="Formation of the Early Elongation Complex"/>
</dbReference>
<dbReference type="Reactome" id="R-SCE-674695">
    <property type="pathway name" value="RNA Polymerase II Pre-transcription Events"/>
</dbReference>
<dbReference type="Reactome" id="R-SCE-6796648">
    <property type="pathway name" value="TP53 Regulates Transcription of DNA Repair Genes"/>
</dbReference>
<dbReference type="Reactome" id="R-SCE-72086">
    <property type="pathway name" value="mRNA Capping"/>
</dbReference>
<dbReference type="Reactome" id="R-SCE-77075">
    <property type="pathway name" value="RNA Pol II CTD phosphorylation and interaction with CE"/>
</dbReference>
<dbReference type="BioGRID-ORCS" id="854999">
    <property type="hits" value="7 hits in 10 CRISPR screens"/>
</dbReference>
<dbReference type="CD-CODE" id="E03F929F">
    <property type="entry name" value="Stress granule"/>
</dbReference>
<dbReference type="EvolutionaryTrace" id="P27692"/>
<dbReference type="PRO" id="PR:P27692"/>
<dbReference type="Proteomes" id="UP000002311">
    <property type="component" value="Chromosome XIII"/>
</dbReference>
<dbReference type="RNAct" id="P27692">
    <property type="molecule type" value="protein"/>
</dbReference>
<dbReference type="GO" id="GO:0000785">
    <property type="term" value="C:chromatin"/>
    <property type="evidence" value="ECO:0000314"/>
    <property type="project" value="SGD"/>
</dbReference>
<dbReference type="GO" id="GO:0032044">
    <property type="term" value="C:DSIF complex"/>
    <property type="evidence" value="ECO:0000353"/>
    <property type="project" value="ComplexPortal"/>
</dbReference>
<dbReference type="GO" id="GO:0005739">
    <property type="term" value="C:mitochondrion"/>
    <property type="evidence" value="ECO:0007005"/>
    <property type="project" value="SGD"/>
</dbReference>
<dbReference type="GO" id="GO:0005634">
    <property type="term" value="C:nucleus"/>
    <property type="evidence" value="ECO:0000314"/>
    <property type="project" value="SGD"/>
</dbReference>
<dbReference type="GO" id="GO:0033553">
    <property type="term" value="C:rDNA heterochromatin"/>
    <property type="evidence" value="ECO:0000314"/>
    <property type="project" value="SGD"/>
</dbReference>
<dbReference type="GO" id="GO:0003677">
    <property type="term" value="F:DNA binding"/>
    <property type="evidence" value="ECO:0000314"/>
    <property type="project" value="SGD"/>
</dbReference>
<dbReference type="GO" id="GO:0042393">
    <property type="term" value="F:histone binding"/>
    <property type="evidence" value="ECO:0000314"/>
    <property type="project" value="SGD"/>
</dbReference>
<dbReference type="GO" id="GO:0003729">
    <property type="term" value="F:mRNA binding"/>
    <property type="evidence" value="ECO:0007005"/>
    <property type="project" value="SGD"/>
</dbReference>
<dbReference type="GO" id="GO:0044877">
    <property type="term" value="F:protein-containing complex binding"/>
    <property type="evidence" value="ECO:0000314"/>
    <property type="project" value="SGD"/>
</dbReference>
<dbReference type="GO" id="GO:0001042">
    <property type="term" value="F:RNA polymerase I core binding"/>
    <property type="evidence" value="ECO:0000314"/>
    <property type="project" value="SGD"/>
</dbReference>
<dbReference type="GO" id="GO:0001179">
    <property type="term" value="F:RNA polymerase I general transcription initiation factor binding"/>
    <property type="evidence" value="ECO:0000314"/>
    <property type="project" value="SGD"/>
</dbReference>
<dbReference type="GO" id="GO:0000993">
    <property type="term" value="F:RNA polymerase II complex binding"/>
    <property type="evidence" value="ECO:0000314"/>
    <property type="project" value="SGD"/>
</dbReference>
<dbReference type="GO" id="GO:0019843">
    <property type="term" value="F:rRNA binding"/>
    <property type="evidence" value="ECO:0000314"/>
    <property type="project" value="SGD"/>
</dbReference>
<dbReference type="GO" id="GO:0070990">
    <property type="term" value="F:snRNP binding"/>
    <property type="evidence" value="ECO:0000314"/>
    <property type="project" value="SGD"/>
</dbReference>
<dbReference type="GO" id="GO:0030619">
    <property type="term" value="F:U1 snRNA binding"/>
    <property type="evidence" value="ECO:0000314"/>
    <property type="project" value="SGD"/>
</dbReference>
<dbReference type="GO" id="GO:0030620">
    <property type="term" value="F:U2 snRNA binding"/>
    <property type="evidence" value="ECO:0000314"/>
    <property type="project" value="SGD"/>
</dbReference>
<dbReference type="GO" id="GO:0030621">
    <property type="term" value="F:U4 snRNA binding"/>
    <property type="evidence" value="ECO:0000314"/>
    <property type="project" value="SGD"/>
</dbReference>
<dbReference type="GO" id="GO:0030623">
    <property type="term" value="F:U5 snRNA binding"/>
    <property type="evidence" value="ECO:0000314"/>
    <property type="project" value="SGD"/>
</dbReference>
<dbReference type="GO" id="GO:0017070">
    <property type="term" value="F:U6 snRNA binding"/>
    <property type="evidence" value="ECO:0000314"/>
    <property type="project" value="SGD"/>
</dbReference>
<dbReference type="GO" id="GO:0006338">
    <property type="term" value="P:chromatin remodeling"/>
    <property type="evidence" value="ECO:0000314"/>
    <property type="project" value="SGD"/>
</dbReference>
<dbReference type="GO" id="GO:0008298">
    <property type="term" value="P:intracellular mRNA localization"/>
    <property type="evidence" value="ECO:0000315"/>
    <property type="project" value="SGD"/>
</dbReference>
<dbReference type="GO" id="GO:2001208">
    <property type="term" value="P:negative regulation of transcription elongation by RNA polymerase I"/>
    <property type="evidence" value="ECO:0000316"/>
    <property type="project" value="SGD"/>
</dbReference>
<dbReference type="GO" id="GO:0010508">
    <property type="term" value="P:positive regulation of autophagy"/>
    <property type="evidence" value="ECO:0000314"/>
    <property type="project" value="SGD"/>
</dbReference>
<dbReference type="GO" id="GO:2001209">
    <property type="term" value="P:positive regulation of transcription elongation by RNA polymerase I"/>
    <property type="evidence" value="ECO:0000315"/>
    <property type="project" value="SGD"/>
</dbReference>
<dbReference type="GO" id="GO:0032968">
    <property type="term" value="P:positive regulation of transcription elongation by RNA polymerase II"/>
    <property type="evidence" value="ECO:0000314"/>
    <property type="project" value="SGD"/>
</dbReference>
<dbReference type="GO" id="GO:0006355">
    <property type="term" value="P:regulation of DNA-templated transcription"/>
    <property type="evidence" value="ECO:0000314"/>
    <property type="project" value="ComplexPortal"/>
</dbReference>
<dbReference type="GO" id="GO:2000232">
    <property type="term" value="P:regulation of rRNA processing"/>
    <property type="evidence" value="ECO:0000315"/>
    <property type="project" value="SGD"/>
</dbReference>
<dbReference type="GO" id="GO:0090262">
    <property type="term" value="P:regulation of transcription-coupled nucleotide-excision repair"/>
    <property type="evidence" value="ECO:0000316"/>
    <property type="project" value="SGD"/>
</dbReference>
<dbReference type="GO" id="GO:0000245">
    <property type="term" value="P:spliceosomal complex assembly"/>
    <property type="evidence" value="ECO:0000314"/>
    <property type="project" value="SGD"/>
</dbReference>
<dbReference type="GO" id="GO:0006368">
    <property type="term" value="P:transcription elongation by RNA polymerase II"/>
    <property type="evidence" value="ECO:0000318"/>
    <property type="project" value="GO_Central"/>
</dbReference>
<dbReference type="GO" id="GO:0140673">
    <property type="term" value="P:transcription elongation-coupled chromatin remodeling"/>
    <property type="evidence" value="ECO:0007669"/>
    <property type="project" value="InterPro"/>
</dbReference>
<dbReference type="CDD" id="cd06081">
    <property type="entry name" value="KOW_Spt5_1"/>
    <property type="match status" value="1"/>
</dbReference>
<dbReference type="CDD" id="cd06082">
    <property type="entry name" value="KOW_Spt5_2"/>
    <property type="match status" value="1"/>
</dbReference>
<dbReference type="CDD" id="cd06083">
    <property type="entry name" value="KOW_Spt5_3"/>
    <property type="match status" value="1"/>
</dbReference>
<dbReference type="CDD" id="cd06084">
    <property type="entry name" value="KOW_Spt5_4"/>
    <property type="match status" value="1"/>
</dbReference>
<dbReference type="CDD" id="cd06085">
    <property type="entry name" value="KOW_Spt5_5"/>
    <property type="match status" value="1"/>
</dbReference>
<dbReference type="CDD" id="cd09888">
    <property type="entry name" value="NGN_Euk"/>
    <property type="match status" value="1"/>
</dbReference>
<dbReference type="FunFam" id="2.30.30.30:FF:000058">
    <property type="entry name" value="Transcription elongation factor SPT5"/>
    <property type="match status" value="1"/>
</dbReference>
<dbReference type="FunFam" id="2.30.30.30:FF:000061">
    <property type="entry name" value="Transcription elongation factor SPT5"/>
    <property type="match status" value="1"/>
</dbReference>
<dbReference type="FunFam" id="2.30.30.30:FF:000063">
    <property type="entry name" value="Transcription elongation factor SPT5"/>
    <property type="match status" value="1"/>
</dbReference>
<dbReference type="FunFam" id="3.30.70.940:FF:000005">
    <property type="entry name" value="Transcription elongation factor SPT5"/>
    <property type="match status" value="1"/>
</dbReference>
<dbReference type="Gene3D" id="2.30.30.30">
    <property type="match status" value="3"/>
</dbReference>
<dbReference type="Gene3D" id="3.30.70.940">
    <property type="entry name" value="NusG, N-terminal domain"/>
    <property type="match status" value="1"/>
</dbReference>
<dbReference type="InterPro" id="IPR005824">
    <property type="entry name" value="KOW"/>
</dbReference>
<dbReference type="InterPro" id="IPR041973">
    <property type="entry name" value="KOW_Spt5_1"/>
</dbReference>
<dbReference type="InterPro" id="IPR041975">
    <property type="entry name" value="KOW_Spt5_2"/>
</dbReference>
<dbReference type="InterPro" id="IPR041976">
    <property type="entry name" value="KOW_Spt5_3"/>
</dbReference>
<dbReference type="InterPro" id="IPR041977">
    <property type="entry name" value="KOW_Spt5_4"/>
</dbReference>
<dbReference type="InterPro" id="IPR041978">
    <property type="entry name" value="KOW_Spt5_5"/>
</dbReference>
<dbReference type="InterPro" id="IPR005100">
    <property type="entry name" value="NGN-domain"/>
</dbReference>
<dbReference type="InterPro" id="IPR006645">
    <property type="entry name" value="NGN-like_dom"/>
</dbReference>
<dbReference type="InterPro" id="IPR036735">
    <property type="entry name" value="NGN_dom_sf"/>
</dbReference>
<dbReference type="InterPro" id="IPR039385">
    <property type="entry name" value="NGN_Euk"/>
</dbReference>
<dbReference type="InterPro" id="IPR014722">
    <property type="entry name" value="Rib_uL2_dom2"/>
</dbReference>
<dbReference type="InterPro" id="IPR039659">
    <property type="entry name" value="SPT5"/>
</dbReference>
<dbReference type="InterPro" id="IPR024945">
    <property type="entry name" value="Spt5_C_dom"/>
</dbReference>
<dbReference type="InterPro" id="IPR022581">
    <property type="entry name" value="Spt5_N"/>
</dbReference>
<dbReference type="InterPro" id="IPR017071">
    <property type="entry name" value="TF_Spt5_eukaryote"/>
</dbReference>
<dbReference type="InterPro" id="IPR008991">
    <property type="entry name" value="Translation_prot_SH3-like_sf"/>
</dbReference>
<dbReference type="PANTHER" id="PTHR11125">
    <property type="entry name" value="SUPPRESSOR OF TY 5"/>
    <property type="match status" value="1"/>
</dbReference>
<dbReference type="PANTHER" id="PTHR11125:SF7">
    <property type="entry name" value="TRANSCRIPTION ELONGATION FACTOR SPT5"/>
    <property type="match status" value="1"/>
</dbReference>
<dbReference type="Pfam" id="PF12815">
    <property type="entry name" value="CTD"/>
    <property type="match status" value="1"/>
</dbReference>
<dbReference type="Pfam" id="PF23042">
    <property type="entry name" value="KOW1_SPT5"/>
    <property type="match status" value="1"/>
</dbReference>
<dbReference type="Pfam" id="PF23284">
    <property type="entry name" value="KOW2_Spt5"/>
    <property type="match status" value="1"/>
</dbReference>
<dbReference type="Pfam" id="PF23291">
    <property type="entry name" value="KOW4_SPT5"/>
    <property type="match status" value="1"/>
</dbReference>
<dbReference type="Pfam" id="PF23290">
    <property type="entry name" value="KOW5_SPT5"/>
    <property type="match status" value="1"/>
</dbReference>
<dbReference type="Pfam" id="PF23037">
    <property type="entry name" value="KOWx_SPT5"/>
    <property type="match status" value="1"/>
</dbReference>
<dbReference type="Pfam" id="PF03439">
    <property type="entry name" value="Spt5-NGN"/>
    <property type="match status" value="1"/>
</dbReference>
<dbReference type="Pfam" id="PF11942">
    <property type="entry name" value="Spt5_N"/>
    <property type="match status" value="1"/>
</dbReference>
<dbReference type="PIRSF" id="PIRSF036945">
    <property type="entry name" value="Spt5"/>
    <property type="match status" value="1"/>
</dbReference>
<dbReference type="SMART" id="SM01104">
    <property type="entry name" value="CTD"/>
    <property type="match status" value="1"/>
</dbReference>
<dbReference type="SMART" id="SM00739">
    <property type="entry name" value="KOW"/>
    <property type="match status" value="4"/>
</dbReference>
<dbReference type="SMART" id="SM00738">
    <property type="entry name" value="NGN"/>
    <property type="match status" value="1"/>
</dbReference>
<dbReference type="SUPFAM" id="SSF50104">
    <property type="entry name" value="Translation proteins SH3-like domain"/>
    <property type="match status" value="2"/>
</dbReference>
<gene>
    <name type="primary">SPT5</name>
    <name type="ordered locus">YML010W</name>
    <name type="ORF">YM9571.08</name>
</gene>
<protein>
    <recommendedName>
        <fullName>Transcription elongation factor SPT5</fullName>
    </recommendedName>
    <alternativeName>
        <fullName>Chromatin elongation factor SPT5</fullName>
    </alternativeName>
</protein>
<proteinExistence type="evidence at protein level"/>
<feature type="chain" id="PRO_0000208477" description="Transcription elongation factor SPT5">
    <location>
        <begin position="1"/>
        <end position="1063"/>
    </location>
</feature>
<feature type="domain" description="KOW 1">
    <location>
        <begin position="382"/>
        <end position="415"/>
    </location>
</feature>
<feature type="domain" description="KOW 2">
    <location>
        <begin position="533"/>
        <end position="560"/>
    </location>
</feature>
<feature type="domain" description="KOW 3">
    <location>
        <begin position="584"/>
        <end position="615"/>
    </location>
</feature>
<feature type="domain" description="KOW 4">
    <location>
        <begin position="799"/>
        <end position="832"/>
    </location>
</feature>
<feature type="repeat" description="1">
    <location>
        <begin position="931"/>
        <end position="936"/>
    </location>
</feature>
<feature type="repeat" description="2">
    <location>
        <begin position="937"/>
        <end position="942"/>
    </location>
</feature>
<feature type="repeat" description="3">
    <location>
        <begin position="948"/>
        <end position="953"/>
    </location>
</feature>
<feature type="repeat" description="4">
    <location>
        <begin position="958"/>
        <end position="963"/>
    </location>
</feature>
<feature type="repeat" description="5">
    <location>
        <begin position="969"/>
        <end position="974"/>
    </location>
</feature>
<feature type="repeat" description="6">
    <location>
        <begin position="975"/>
        <end position="980"/>
    </location>
</feature>
<feature type="repeat" description="7">
    <location>
        <begin position="981"/>
        <end position="986"/>
    </location>
</feature>
<feature type="repeat" description="8">
    <location>
        <begin position="987"/>
        <end position="992"/>
    </location>
</feature>
<feature type="repeat" description="9">
    <location>
        <begin position="1000"/>
        <end position="1005"/>
    </location>
</feature>
<feature type="repeat" description="10">
    <location>
        <begin position="1009"/>
        <end position="1014"/>
    </location>
</feature>
<feature type="repeat" description="11">
    <location>
        <begin position="1015"/>
        <end position="1020"/>
    </location>
</feature>
<feature type="repeat" description="12">
    <location>
        <begin position="1032"/>
        <end position="1037"/>
    </location>
</feature>
<feature type="repeat" description="13">
    <location>
        <begin position="1043"/>
        <end position="1048"/>
    </location>
</feature>
<feature type="repeat" description="14">
    <location>
        <begin position="1052"/>
        <end position="1057"/>
    </location>
</feature>
<feature type="repeat" description="15">
    <location>
        <begin position="1058"/>
        <end position="1063"/>
    </location>
</feature>
<feature type="region of interest" description="Disordered" evidence="1">
    <location>
        <begin position="1"/>
        <end position="228"/>
    </location>
</feature>
<feature type="region of interest" description="15 X 6 AA tandem repeats of S-[TA]-W-G-G-[AQ]">
    <location>
        <begin position="931"/>
        <end position="1063"/>
    </location>
</feature>
<feature type="region of interest" description="Disordered" evidence="1">
    <location>
        <begin position="942"/>
        <end position="1063"/>
    </location>
</feature>
<feature type="compositionally biased region" description="Polar residues" evidence="1">
    <location>
        <begin position="1"/>
        <end position="11"/>
    </location>
</feature>
<feature type="compositionally biased region" description="Basic and acidic residues" evidence="1">
    <location>
        <begin position="29"/>
        <end position="41"/>
    </location>
</feature>
<feature type="compositionally biased region" description="Polar residues" evidence="1">
    <location>
        <begin position="74"/>
        <end position="112"/>
    </location>
</feature>
<feature type="compositionally biased region" description="Basic and acidic residues" evidence="1">
    <location>
        <begin position="114"/>
        <end position="144"/>
    </location>
</feature>
<feature type="compositionally biased region" description="Acidic residues" evidence="1">
    <location>
        <begin position="145"/>
        <end position="167"/>
    </location>
</feature>
<feature type="compositionally biased region" description="Acidic residues" evidence="1">
    <location>
        <begin position="183"/>
        <end position="200"/>
    </location>
</feature>
<feature type="compositionally biased region" description="Gly residues" evidence="1">
    <location>
        <begin position="942"/>
        <end position="965"/>
    </location>
</feature>
<feature type="compositionally biased region" description="Low complexity" evidence="1">
    <location>
        <begin position="966"/>
        <end position="993"/>
    </location>
</feature>
<feature type="compositionally biased region" description="Polar residues" evidence="1">
    <location>
        <begin position="1043"/>
        <end position="1057"/>
    </location>
</feature>
<feature type="modified residue" description="Phosphothreonine" evidence="13">
    <location>
        <position position="35"/>
    </location>
</feature>
<feature type="modified residue" description="Phosphothreonine" evidence="12">
    <location>
        <position position="133"/>
    </location>
</feature>
<feature type="modified residue" description="Phosphoserine" evidence="12">
    <location>
        <position position="136"/>
    </location>
</feature>
<feature type="modified residue" description="Phosphoserine" evidence="13">
    <location>
        <position position="188"/>
    </location>
</feature>
<feature type="modified residue" description="Phosphoserine" evidence="13">
    <location>
        <position position="219"/>
    </location>
</feature>
<feature type="helix" evidence="17">
    <location>
        <begin position="275"/>
        <end position="278"/>
    </location>
</feature>
<feature type="turn" evidence="17">
    <location>
        <begin position="282"/>
        <end position="284"/>
    </location>
</feature>
<feature type="strand" evidence="17">
    <location>
        <begin position="287"/>
        <end position="292"/>
    </location>
</feature>
<feature type="helix" evidence="17">
    <location>
        <begin position="297"/>
        <end position="315"/>
    </location>
</feature>
<feature type="strand" evidence="17">
    <location>
        <begin position="324"/>
        <end position="327"/>
    </location>
</feature>
<feature type="strand" evidence="17">
    <location>
        <begin position="329"/>
        <end position="331"/>
    </location>
</feature>
<feature type="strand" evidence="17">
    <location>
        <begin position="334"/>
        <end position="338"/>
    </location>
</feature>
<feature type="helix" evidence="17">
    <location>
        <begin position="342"/>
        <end position="349"/>
    </location>
</feature>
<feature type="strand" evidence="17">
    <location>
        <begin position="355"/>
        <end position="362"/>
    </location>
</feature>
<feature type="helix" evidence="17">
    <location>
        <begin position="365"/>
        <end position="367"/>
    </location>
</feature>
<feature type="helix" evidence="17">
    <location>
        <begin position="368"/>
        <end position="372"/>
    </location>
</feature>
<feature type="strand" evidence="14">
    <location>
        <begin position="387"/>
        <end position="390"/>
    </location>
</feature>
<feature type="strand" evidence="17">
    <location>
        <begin position="391"/>
        <end position="393"/>
    </location>
</feature>
<feature type="turn" evidence="14">
    <location>
        <begin position="394"/>
        <end position="397"/>
    </location>
</feature>
<feature type="strand" evidence="14">
    <location>
        <begin position="399"/>
        <end position="405"/>
    </location>
</feature>
<feature type="strand" evidence="14">
    <location>
        <begin position="409"/>
        <end position="416"/>
    </location>
</feature>
<feature type="turn" evidence="14">
    <location>
        <begin position="422"/>
        <end position="425"/>
    </location>
</feature>
<feature type="helix" evidence="14">
    <location>
        <begin position="442"/>
        <end position="444"/>
    </location>
</feature>
<feature type="helix" evidence="14">
    <location>
        <begin position="453"/>
        <end position="460"/>
    </location>
</feature>
<feature type="helix" evidence="14">
    <location>
        <begin position="461"/>
        <end position="463"/>
    </location>
</feature>
<feature type="strand" evidence="14">
    <location>
        <begin position="464"/>
        <end position="468"/>
    </location>
</feature>
<feature type="strand" evidence="14">
    <location>
        <begin position="471"/>
        <end position="474"/>
    </location>
</feature>
<feature type="strand" evidence="14">
    <location>
        <begin position="477"/>
        <end position="480"/>
    </location>
</feature>
<feature type="strand" evidence="14">
    <location>
        <begin position="483"/>
        <end position="489"/>
    </location>
</feature>
<feature type="helix" evidence="14">
    <location>
        <begin position="490"/>
        <end position="492"/>
    </location>
</feature>
<feature type="helix" evidence="14">
    <location>
        <begin position="502"/>
        <end position="507"/>
    </location>
</feature>
<feature type="strand" evidence="15">
    <location>
        <begin position="539"/>
        <end position="542"/>
    </location>
</feature>
<feature type="turn" evidence="15">
    <location>
        <begin position="546"/>
        <end position="549"/>
    </location>
</feature>
<feature type="strand" evidence="15">
    <location>
        <begin position="551"/>
        <end position="566"/>
    </location>
</feature>
<feature type="strand" evidence="15">
    <location>
        <begin position="573"/>
        <end position="576"/>
    </location>
</feature>
<feature type="helix" evidence="15">
    <location>
        <begin position="577"/>
        <end position="579"/>
    </location>
</feature>
<feature type="strand" evidence="15">
    <location>
        <begin position="580"/>
        <end position="582"/>
    </location>
</feature>
<feature type="strand" evidence="15">
    <location>
        <begin position="589"/>
        <end position="592"/>
    </location>
</feature>
<feature type="turn" evidence="15">
    <location>
        <begin position="596"/>
        <end position="599"/>
    </location>
</feature>
<feature type="strand" evidence="15">
    <location>
        <begin position="601"/>
        <end position="608"/>
    </location>
</feature>
<feature type="strand" evidence="15">
    <location>
        <begin position="611"/>
        <end position="616"/>
    </location>
</feature>
<feature type="turn" evidence="15">
    <location>
        <begin position="617"/>
        <end position="619"/>
    </location>
</feature>
<feature type="strand" evidence="15">
    <location>
        <begin position="620"/>
        <end position="626"/>
    </location>
</feature>
<feature type="helix" evidence="15">
    <location>
        <begin position="627"/>
        <end position="629"/>
    </location>
</feature>
<feature type="strand" evidence="17">
    <location>
        <begin position="630"/>
        <end position="632"/>
    </location>
</feature>
<feature type="strand" evidence="17">
    <location>
        <begin position="648"/>
        <end position="650"/>
    </location>
</feature>
<feature type="strand" evidence="17">
    <location>
        <begin position="652"/>
        <end position="654"/>
    </location>
</feature>
<feature type="strand" evidence="17">
    <location>
        <begin position="656"/>
        <end position="661"/>
    </location>
</feature>
<feature type="strand" evidence="17">
    <location>
        <begin position="664"/>
        <end position="671"/>
    </location>
</feature>
<feature type="strand" evidence="17">
    <location>
        <begin position="676"/>
        <end position="680"/>
    </location>
</feature>
<feature type="helix" evidence="17">
    <location>
        <begin position="681"/>
        <end position="683"/>
    </location>
</feature>
<feature type="turn" evidence="17">
    <location>
        <begin position="690"/>
        <end position="692"/>
    </location>
</feature>
<feature type="strand" evidence="17">
    <location>
        <begin position="710"/>
        <end position="717"/>
    </location>
</feature>
<feature type="strand" evidence="17">
    <location>
        <begin position="720"/>
        <end position="726"/>
    </location>
</feature>
<feature type="strand" evidence="17">
    <location>
        <begin position="731"/>
        <end position="734"/>
    </location>
</feature>
<feature type="helix" evidence="17">
    <location>
        <begin position="740"/>
        <end position="743"/>
    </location>
</feature>
<feature type="strand" evidence="17">
    <location>
        <begin position="744"/>
        <end position="747"/>
    </location>
</feature>
<feature type="helix" evidence="17">
    <location>
        <begin position="749"/>
        <end position="751"/>
    </location>
</feature>
<feature type="strand" evidence="17">
    <location>
        <begin position="752"/>
        <end position="754"/>
    </location>
</feature>
<feature type="strand" evidence="16">
    <location>
        <begin position="799"/>
        <end position="802"/>
    </location>
</feature>
<feature type="strand" evidence="16">
    <location>
        <begin position="804"/>
        <end position="806"/>
    </location>
</feature>
<feature type="helix" evidence="16">
    <location>
        <begin position="810"/>
        <end position="812"/>
    </location>
</feature>
<feature type="strand" evidence="16">
    <location>
        <begin position="816"/>
        <end position="823"/>
    </location>
</feature>
<feature type="strand" evidence="16">
    <location>
        <begin position="826"/>
        <end position="830"/>
    </location>
</feature>
<feature type="strand" evidence="16">
    <location>
        <begin position="832"/>
        <end position="835"/>
    </location>
</feature>
<feature type="strand" evidence="16">
    <location>
        <begin position="837"/>
        <end position="841"/>
    </location>
</feature>
<feature type="turn" evidence="16">
    <location>
        <begin position="842"/>
        <end position="844"/>
    </location>
</feature>
<feature type="strand" evidence="16">
    <location>
        <begin position="845"/>
        <end position="847"/>
    </location>
</feature>
<feature type="strand" evidence="17">
    <location>
        <begin position="850"/>
        <end position="852"/>
    </location>
</feature>
<feature type="helix" evidence="16">
    <location>
        <begin position="859"/>
        <end position="861"/>
    </location>
</feature>